<comment type="function">
    <text evidence="1">NDH-1 shuttles electrons from NADH, via FMN and iron-sulfur (Fe-S) centers, to quinones in the respiratory chain. The immediate electron acceptor for the enzyme in this species is believed to be ubiquinone. Couples the redox reaction to proton translocation (for every two electrons transferred, four hydrogen ions are translocated across the cytoplasmic membrane), and thus conserves the redox energy in a proton gradient.</text>
</comment>
<comment type="catalytic activity">
    <reaction evidence="1">
        <text>a quinone + NADH + 5 H(+)(in) = a quinol + NAD(+) + 4 H(+)(out)</text>
        <dbReference type="Rhea" id="RHEA:57888"/>
        <dbReference type="ChEBI" id="CHEBI:15378"/>
        <dbReference type="ChEBI" id="CHEBI:24646"/>
        <dbReference type="ChEBI" id="CHEBI:57540"/>
        <dbReference type="ChEBI" id="CHEBI:57945"/>
        <dbReference type="ChEBI" id="CHEBI:132124"/>
    </reaction>
</comment>
<comment type="subunit">
    <text evidence="1">NDH-1 is composed of 13 different subunits. Subunits NuoA, H, J, K, L, M, N constitute the membrane sector of the complex.</text>
</comment>
<comment type="subcellular location">
    <subcellularLocation>
        <location evidence="1">Cell inner membrane</location>
        <topology evidence="1">Multi-pass membrane protein</topology>
    </subcellularLocation>
</comment>
<comment type="similarity">
    <text evidence="1">Belongs to the complex I subunit 4L family.</text>
</comment>
<accession>A8ADW0</accession>
<reference key="1">
    <citation type="submission" date="2007-08" db="EMBL/GenBank/DDBJ databases">
        <authorList>
            <consortium name="The Citrobacter koseri Genome Sequencing Project"/>
            <person name="McClelland M."/>
            <person name="Sanderson E.K."/>
            <person name="Porwollik S."/>
            <person name="Spieth J."/>
            <person name="Clifton W.S."/>
            <person name="Latreille P."/>
            <person name="Courtney L."/>
            <person name="Wang C."/>
            <person name="Pepin K."/>
            <person name="Bhonagiri V."/>
            <person name="Nash W."/>
            <person name="Johnson M."/>
            <person name="Thiruvilangam P."/>
            <person name="Wilson R."/>
        </authorList>
    </citation>
    <scope>NUCLEOTIDE SEQUENCE [LARGE SCALE GENOMIC DNA]</scope>
    <source>
        <strain>ATCC BAA-895 / CDC 4225-83 / SGSC4696</strain>
    </source>
</reference>
<dbReference type="EC" id="7.1.1.-" evidence="1"/>
<dbReference type="EMBL" id="CP000822">
    <property type="protein sequence ID" value="ABV11673.1"/>
    <property type="molecule type" value="Genomic_DNA"/>
</dbReference>
<dbReference type="RefSeq" id="WP_000612644.1">
    <property type="nucleotide sequence ID" value="NC_009792.1"/>
</dbReference>
<dbReference type="SMR" id="A8ADW0"/>
<dbReference type="STRING" id="290338.CKO_00517"/>
<dbReference type="GeneID" id="93033872"/>
<dbReference type="KEGG" id="cko:CKO_00517"/>
<dbReference type="HOGENOM" id="CLU_144724_0_1_6"/>
<dbReference type="OrthoDB" id="9801357at2"/>
<dbReference type="Proteomes" id="UP000008148">
    <property type="component" value="Chromosome"/>
</dbReference>
<dbReference type="GO" id="GO:0030964">
    <property type="term" value="C:NADH dehydrogenase complex"/>
    <property type="evidence" value="ECO:0007669"/>
    <property type="project" value="TreeGrafter"/>
</dbReference>
<dbReference type="GO" id="GO:0005886">
    <property type="term" value="C:plasma membrane"/>
    <property type="evidence" value="ECO:0007669"/>
    <property type="project" value="UniProtKB-SubCell"/>
</dbReference>
<dbReference type="GO" id="GO:0050136">
    <property type="term" value="F:NADH:ubiquinone reductase (non-electrogenic) activity"/>
    <property type="evidence" value="ECO:0007669"/>
    <property type="project" value="UniProtKB-UniRule"/>
</dbReference>
<dbReference type="GO" id="GO:0048038">
    <property type="term" value="F:quinone binding"/>
    <property type="evidence" value="ECO:0007669"/>
    <property type="project" value="UniProtKB-KW"/>
</dbReference>
<dbReference type="GO" id="GO:0042773">
    <property type="term" value="P:ATP synthesis coupled electron transport"/>
    <property type="evidence" value="ECO:0007669"/>
    <property type="project" value="InterPro"/>
</dbReference>
<dbReference type="FunFam" id="1.10.287.3510:FF:000001">
    <property type="entry name" value="NADH-quinone oxidoreductase subunit K"/>
    <property type="match status" value="1"/>
</dbReference>
<dbReference type="Gene3D" id="1.10.287.3510">
    <property type="match status" value="1"/>
</dbReference>
<dbReference type="HAMAP" id="MF_01456">
    <property type="entry name" value="NDH1_NuoK"/>
    <property type="match status" value="1"/>
</dbReference>
<dbReference type="InterPro" id="IPR001133">
    <property type="entry name" value="NADH_UbQ_OxRdtase_chain4L/K"/>
</dbReference>
<dbReference type="InterPro" id="IPR039428">
    <property type="entry name" value="NUOK/Mnh_C1-like"/>
</dbReference>
<dbReference type="NCBIfam" id="NF004319">
    <property type="entry name" value="PRK05715.1-1"/>
    <property type="match status" value="1"/>
</dbReference>
<dbReference type="NCBIfam" id="NF004320">
    <property type="entry name" value="PRK05715.1-2"/>
    <property type="match status" value="1"/>
</dbReference>
<dbReference type="PANTHER" id="PTHR11434:SF16">
    <property type="entry name" value="NADH-UBIQUINONE OXIDOREDUCTASE CHAIN 4L"/>
    <property type="match status" value="1"/>
</dbReference>
<dbReference type="PANTHER" id="PTHR11434">
    <property type="entry name" value="NADH-UBIQUINONE OXIDOREDUCTASE SUBUNIT ND4L"/>
    <property type="match status" value="1"/>
</dbReference>
<dbReference type="Pfam" id="PF00420">
    <property type="entry name" value="Oxidored_q2"/>
    <property type="match status" value="1"/>
</dbReference>
<proteinExistence type="inferred from homology"/>
<protein>
    <recommendedName>
        <fullName evidence="1">NADH-quinone oxidoreductase subunit K</fullName>
        <ecNumber evidence="1">7.1.1.-</ecNumber>
    </recommendedName>
    <alternativeName>
        <fullName evidence="1">NADH dehydrogenase I subunit K</fullName>
    </alternativeName>
    <alternativeName>
        <fullName evidence="1">NDH-1 subunit K</fullName>
    </alternativeName>
</protein>
<name>NUOK_CITK8</name>
<feature type="chain" id="PRO_0000390017" description="NADH-quinone oxidoreductase subunit K">
    <location>
        <begin position="1"/>
        <end position="100"/>
    </location>
</feature>
<feature type="transmembrane region" description="Helical" evidence="1">
    <location>
        <begin position="4"/>
        <end position="24"/>
    </location>
</feature>
<feature type="transmembrane region" description="Helical" evidence="1">
    <location>
        <begin position="28"/>
        <end position="48"/>
    </location>
</feature>
<feature type="transmembrane region" description="Helical" evidence="1">
    <location>
        <begin position="60"/>
        <end position="80"/>
    </location>
</feature>
<sequence length="100" mass="10845">MIPLQHGLILAAILFVLGLTGLVIRRNLLFMLIGLEIMINASALAFVVAGSYWGQTDGQVMYILAISLAAAEASIGLALLLQLHRRRQNLNIDSVSEMRG</sequence>
<keyword id="KW-0997">Cell inner membrane</keyword>
<keyword id="KW-1003">Cell membrane</keyword>
<keyword id="KW-0472">Membrane</keyword>
<keyword id="KW-0520">NAD</keyword>
<keyword id="KW-0874">Quinone</keyword>
<keyword id="KW-1185">Reference proteome</keyword>
<keyword id="KW-1278">Translocase</keyword>
<keyword id="KW-0812">Transmembrane</keyword>
<keyword id="KW-1133">Transmembrane helix</keyword>
<keyword id="KW-0813">Transport</keyword>
<keyword id="KW-0830">Ubiquinone</keyword>
<evidence type="ECO:0000255" key="1">
    <source>
        <dbReference type="HAMAP-Rule" id="MF_01456"/>
    </source>
</evidence>
<gene>
    <name evidence="1" type="primary">nuoK</name>
    <name type="ordered locus">CKO_00517</name>
</gene>
<organism>
    <name type="scientific">Citrobacter koseri (strain ATCC BAA-895 / CDC 4225-83 / SGSC4696)</name>
    <dbReference type="NCBI Taxonomy" id="290338"/>
    <lineage>
        <taxon>Bacteria</taxon>
        <taxon>Pseudomonadati</taxon>
        <taxon>Pseudomonadota</taxon>
        <taxon>Gammaproteobacteria</taxon>
        <taxon>Enterobacterales</taxon>
        <taxon>Enterobacteriaceae</taxon>
        <taxon>Citrobacter</taxon>
    </lineage>
</organism>